<evidence type="ECO:0000255" key="1">
    <source>
        <dbReference type="HAMAP-Rule" id="MF_01803"/>
    </source>
</evidence>
<reference key="1">
    <citation type="journal article" date="2009" name="PLoS Genet.">
        <title>Organised genome dynamics in the Escherichia coli species results in highly diverse adaptive paths.</title>
        <authorList>
            <person name="Touchon M."/>
            <person name="Hoede C."/>
            <person name="Tenaillon O."/>
            <person name="Barbe V."/>
            <person name="Baeriswyl S."/>
            <person name="Bidet P."/>
            <person name="Bingen E."/>
            <person name="Bonacorsi S."/>
            <person name="Bouchier C."/>
            <person name="Bouvet O."/>
            <person name="Calteau A."/>
            <person name="Chiapello H."/>
            <person name="Clermont O."/>
            <person name="Cruveiller S."/>
            <person name="Danchin A."/>
            <person name="Diard M."/>
            <person name="Dossat C."/>
            <person name="Karoui M.E."/>
            <person name="Frapy E."/>
            <person name="Garry L."/>
            <person name="Ghigo J.M."/>
            <person name="Gilles A.M."/>
            <person name="Johnson J."/>
            <person name="Le Bouguenec C."/>
            <person name="Lescat M."/>
            <person name="Mangenot S."/>
            <person name="Martinez-Jehanne V."/>
            <person name="Matic I."/>
            <person name="Nassif X."/>
            <person name="Oztas S."/>
            <person name="Petit M.A."/>
            <person name="Pichon C."/>
            <person name="Rouy Z."/>
            <person name="Ruf C.S."/>
            <person name="Schneider D."/>
            <person name="Tourret J."/>
            <person name="Vacherie B."/>
            <person name="Vallenet D."/>
            <person name="Medigue C."/>
            <person name="Rocha E.P.C."/>
            <person name="Denamur E."/>
        </authorList>
    </citation>
    <scope>NUCLEOTIDE SEQUENCE [LARGE SCALE GENOMIC DNA]</scope>
    <source>
        <strain>IAI1</strain>
    </source>
</reference>
<proteinExistence type="inferred from homology"/>
<organism>
    <name type="scientific">Escherichia coli O8 (strain IAI1)</name>
    <dbReference type="NCBI Taxonomy" id="585034"/>
    <lineage>
        <taxon>Bacteria</taxon>
        <taxon>Pseudomonadati</taxon>
        <taxon>Pseudomonadota</taxon>
        <taxon>Gammaproteobacteria</taxon>
        <taxon>Enterobacterales</taxon>
        <taxon>Enterobacteriaceae</taxon>
        <taxon>Escherichia</taxon>
    </lineage>
</organism>
<accession>B7M851</accession>
<protein>
    <recommendedName>
        <fullName evidence="1">Chromosome partition protein MukF</fullName>
    </recommendedName>
</protein>
<dbReference type="EMBL" id="CU928160">
    <property type="protein sequence ID" value="CAQ97827.1"/>
    <property type="molecule type" value="Genomic_DNA"/>
</dbReference>
<dbReference type="RefSeq" id="WP_001288850.1">
    <property type="nucleotide sequence ID" value="NC_011741.1"/>
</dbReference>
<dbReference type="SMR" id="B7M851"/>
<dbReference type="GeneID" id="93776493"/>
<dbReference type="KEGG" id="ecr:ECIAI1_0963"/>
<dbReference type="HOGENOM" id="CLU_049853_0_0_6"/>
<dbReference type="GO" id="GO:0005737">
    <property type="term" value="C:cytoplasm"/>
    <property type="evidence" value="ECO:0007669"/>
    <property type="project" value="UniProtKB-UniRule"/>
</dbReference>
<dbReference type="GO" id="GO:0009295">
    <property type="term" value="C:nucleoid"/>
    <property type="evidence" value="ECO:0007669"/>
    <property type="project" value="UniProtKB-SubCell"/>
</dbReference>
<dbReference type="GO" id="GO:0005509">
    <property type="term" value="F:calcium ion binding"/>
    <property type="evidence" value="ECO:0007669"/>
    <property type="project" value="UniProtKB-UniRule"/>
</dbReference>
<dbReference type="GO" id="GO:0051301">
    <property type="term" value="P:cell division"/>
    <property type="evidence" value="ECO:0007669"/>
    <property type="project" value="UniProtKB-KW"/>
</dbReference>
<dbReference type="GO" id="GO:0030261">
    <property type="term" value="P:chromosome condensation"/>
    <property type="evidence" value="ECO:0007669"/>
    <property type="project" value="UniProtKB-KW"/>
</dbReference>
<dbReference type="GO" id="GO:0007059">
    <property type="term" value="P:chromosome segregation"/>
    <property type="evidence" value="ECO:0007669"/>
    <property type="project" value="UniProtKB-UniRule"/>
</dbReference>
<dbReference type="GO" id="GO:0006260">
    <property type="term" value="P:DNA replication"/>
    <property type="evidence" value="ECO:0007669"/>
    <property type="project" value="UniProtKB-UniRule"/>
</dbReference>
<dbReference type="CDD" id="cd16337">
    <property type="entry name" value="MukF_C"/>
    <property type="match status" value="1"/>
</dbReference>
<dbReference type="CDD" id="cd16335">
    <property type="entry name" value="MukF_N"/>
    <property type="match status" value="1"/>
</dbReference>
<dbReference type="Gene3D" id="1.20.58.590">
    <property type="entry name" value="Chromosome partition protein MukF, middle domain"/>
    <property type="match status" value="1"/>
</dbReference>
<dbReference type="Gene3D" id="1.10.225.40">
    <property type="entry name" value="MukF, C-terminal domain"/>
    <property type="match status" value="1"/>
</dbReference>
<dbReference type="Gene3D" id="1.10.10.10">
    <property type="entry name" value="Winged helix-like DNA-binding domain superfamily/Winged helix DNA-binding domain"/>
    <property type="match status" value="1"/>
</dbReference>
<dbReference type="HAMAP" id="MF_01803">
    <property type="entry name" value="MukF"/>
    <property type="match status" value="1"/>
</dbReference>
<dbReference type="InterPro" id="IPR005582">
    <property type="entry name" value="Chromosome_partition_MukF"/>
</dbReference>
<dbReference type="InterPro" id="IPR033441">
    <property type="entry name" value="MukF_C"/>
</dbReference>
<dbReference type="InterPro" id="IPR038198">
    <property type="entry name" value="MukF_C_sf"/>
</dbReference>
<dbReference type="InterPro" id="IPR033440">
    <property type="entry name" value="MukF_M"/>
</dbReference>
<dbReference type="InterPro" id="IPR036141">
    <property type="entry name" value="MukF_M_sp"/>
</dbReference>
<dbReference type="InterPro" id="IPR033439">
    <property type="entry name" value="MukF_WHTH"/>
</dbReference>
<dbReference type="InterPro" id="IPR036388">
    <property type="entry name" value="WH-like_DNA-bd_sf"/>
</dbReference>
<dbReference type="InterPro" id="IPR036390">
    <property type="entry name" value="WH_DNA-bd_sf"/>
</dbReference>
<dbReference type="NCBIfam" id="NF003615">
    <property type="entry name" value="PRK05260.1"/>
    <property type="match status" value="1"/>
</dbReference>
<dbReference type="Pfam" id="PF03882">
    <property type="entry name" value="KicB"/>
    <property type="match status" value="1"/>
</dbReference>
<dbReference type="Pfam" id="PF17193">
    <property type="entry name" value="MukF_C"/>
    <property type="match status" value="1"/>
</dbReference>
<dbReference type="Pfam" id="PF17192">
    <property type="entry name" value="MukF_M"/>
    <property type="match status" value="1"/>
</dbReference>
<dbReference type="PIRSF" id="PIRSF018282">
    <property type="entry name" value="MukF"/>
    <property type="match status" value="1"/>
</dbReference>
<dbReference type="SUPFAM" id="SSF140570">
    <property type="entry name" value="MukF C-terminal domain-like"/>
    <property type="match status" value="1"/>
</dbReference>
<dbReference type="SUPFAM" id="SSF46785">
    <property type="entry name" value="Winged helix' DNA-binding domain"/>
    <property type="match status" value="1"/>
</dbReference>
<gene>
    <name evidence="1" type="primary">mukF</name>
    <name type="ordered locus">ECIAI1_0963</name>
</gene>
<name>MUKF_ECO8A</name>
<keyword id="KW-0106">Calcium</keyword>
<keyword id="KW-0131">Cell cycle</keyword>
<keyword id="KW-0132">Cell division</keyword>
<keyword id="KW-0159">Chromosome partition</keyword>
<keyword id="KW-0963">Cytoplasm</keyword>
<keyword id="KW-0226">DNA condensation</keyword>
<feature type="chain" id="PRO_1000187504" description="Chromosome partition protein MukF">
    <location>
        <begin position="1"/>
        <end position="440"/>
    </location>
</feature>
<feature type="region of interest" description="Leucine-zipper">
    <location>
        <begin position="208"/>
        <end position="236"/>
    </location>
</feature>
<sequence length="440" mass="50579">MSEFSQTVPELVAWARKNDFSISLPVDRLSFLLAVATLNGERLDGEMSEGELVDAFRHVSDAFEQTSETIGVRANNAINDMVRQRLLNRFTSEQAEGNAIYRLTPLGIGITDYYIRQREFSTLRLSMQLSIVAGELKRAADAAEEGGDEFHWHRNVYAPLKYSVAEIFDSIDLTQRLMDEQQQQVKDDIAQLLNKDWRAAISSCELLLSETSGTLRELQDTLEAAGDKLQANLLRIQDATMTHDDLHFVDRLVFDLQSKLDRIISWGQQSIDLWIGYDRHVHKFIRTAIDMDKNRVFAQRLRQSVQTYFDEPWALTYANADRLLDMRDEEMALRDEEVTGELPEDLEYEEFNEIREQLAAIIEEQLAVYKTRQVPLDLGLVVREYLSQYPRARHFDVARIVIDQAVRLGVAQADFTGLPAKWQPINDYGAKVQAHVIDKY</sequence>
<comment type="function">
    <text evidence="1">Involved in chromosome condensation, segregation and cell cycle progression. May participate in facilitating chromosome segregation by condensation DNA from both sides of a centrally located replisome during cell division. Not required for mini-F plasmid partitioning. Probably acts via its interaction with MukB and MukE. Overexpression results in anucleate cells. It has a calcium binding activity.</text>
</comment>
<comment type="subunit">
    <text evidence="1">Interacts, and probably forms a ternary complex, with MukE and MukB via its C-terminal region. The complex formation is stimulated by calcium or magnesium. It is required for an interaction between MukE and MukB.</text>
</comment>
<comment type="subcellular location">
    <subcellularLocation>
        <location evidence="1">Cytoplasm</location>
        <location evidence="1">Nucleoid</location>
    </subcellularLocation>
    <text evidence="1">Restricted to the nucleoid region.</text>
</comment>
<comment type="similarity">
    <text evidence="1">Belongs to the MukF family.</text>
</comment>